<evidence type="ECO:0000250" key="1">
    <source>
        <dbReference type="UniProtKB" id="O31041"/>
    </source>
</evidence>
<evidence type="ECO:0000269" key="2">
    <source>
    </source>
</evidence>
<evidence type="ECO:0000269" key="3">
    <source>
    </source>
</evidence>
<evidence type="ECO:0000269" key="4">
    <source>
    </source>
</evidence>
<evidence type="ECO:0000303" key="5">
    <source>
    </source>
</evidence>
<evidence type="ECO:0000305" key="6"/>
<evidence type="ECO:0000305" key="7">
    <source>
    </source>
</evidence>
<evidence type="ECO:0000305" key="8">
    <source>
    </source>
</evidence>
<evidence type="ECO:0000305" key="9">
    <source>
    </source>
</evidence>
<keyword id="KW-1283">Bacterial microcompartment</keyword>
<keyword id="KW-0846">Cobalamin</keyword>
<keyword id="KW-0170">Cobalt</keyword>
<keyword id="KW-0456">Lyase</keyword>
<feature type="chain" id="PRO_0000454259" description="Propanediol dehydratase medium subunit">
    <location>
        <begin position="1"/>
        <end position="224"/>
    </location>
</feature>
<feature type="region of interest" description="Targets protein to the BMC" evidence="4">
    <location>
        <begin position="1"/>
        <end position="18"/>
    </location>
</feature>
<proteinExistence type="evidence at protein level"/>
<dbReference type="EC" id="4.2.1.28" evidence="7"/>
<dbReference type="EMBL" id="AM498294">
    <property type="protein sequence ID" value="CAM57286.1"/>
    <property type="molecule type" value="Genomic_DNA"/>
</dbReference>
<dbReference type="RefSeq" id="WP_003844241.1">
    <property type="nucleotide sequence ID" value="NZ_VKMV01000002.1"/>
</dbReference>
<dbReference type="SMR" id="P0DUM8"/>
<dbReference type="GeneID" id="87000679"/>
<dbReference type="OrthoDB" id="4218at2"/>
<dbReference type="UniPathway" id="UPA00621"/>
<dbReference type="GO" id="GO:0031469">
    <property type="term" value="C:bacterial microcompartment"/>
    <property type="evidence" value="ECO:0007669"/>
    <property type="project" value="UniProtKB-SubCell"/>
</dbReference>
<dbReference type="GO" id="GO:0031419">
    <property type="term" value="F:cobalamin binding"/>
    <property type="evidence" value="ECO:0007669"/>
    <property type="project" value="UniProtKB-KW"/>
</dbReference>
<dbReference type="GO" id="GO:0016829">
    <property type="term" value="F:lyase activity"/>
    <property type="evidence" value="ECO:0007669"/>
    <property type="project" value="UniProtKB-KW"/>
</dbReference>
<dbReference type="GO" id="GO:0051144">
    <property type="term" value="P:propanediol catabolic process"/>
    <property type="evidence" value="ECO:0007669"/>
    <property type="project" value="UniProtKB-UniPathway"/>
</dbReference>
<dbReference type="Gene3D" id="3.40.50.10150">
    <property type="entry name" value="B12-dependent dehydatase associated subunit"/>
    <property type="match status" value="1"/>
</dbReference>
<dbReference type="InterPro" id="IPR010254">
    <property type="entry name" value="B12-dep_deHydtase_bsu"/>
</dbReference>
<dbReference type="InterPro" id="IPR003208">
    <property type="entry name" value="Dehydtase/Dehydtase_re"/>
</dbReference>
<dbReference type="InterPro" id="IPR025541">
    <property type="entry name" value="Ppandiol/glycerol_DHydtase_msu"/>
</dbReference>
<dbReference type="NCBIfam" id="NF011616">
    <property type="entry name" value="PRK15042.1"/>
    <property type="match status" value="1"/>
</dbReference>
<dbReference type="Pfam" id="PF02288">
    <property type="entry name" value="Dehydratase_MU"/>
    <property type="match status" value="1"/>
</dbReference>
<dbReference type="PIRSF" id="PIRSF018506">
    <property type="entry name" value="Prpndl_dhdrts_md"/>
    <property type="match status" value="1"/>
</dbReference>
<dbReference type="SUPFAM" id="SSF52968">
    <property type="entry name" value="B12-dependent dehydatase associated subunit"/>
    <property type="match status" value="1"/>
</dbReference>
<accession>P0DUM8</accession>
<sequence length="224" mass="24281">MEINEKLLRQIIEDVLSEMQTSDKPVSFRASTAASAPQAAAAQGDSFLTEIGEAKQGQQQDEVIIAVGPAFGLSQTVNIVGIPHKNILREVIAGIEEEGIKARVIRCFKSSDVAFVAVEGNRLSGSGISIGIQSKGTTVIHQQGLPPLSNLELFPQAPLLTLETYRQIGKNAARYAKRESPQPVPTLNDQMARPKYQAKSAILHIKETKYVVTGKNPQELRVAL</sequence>
<comment type="function">
    <text evidence="3 4 7">Part of the PduCDE complex that catalyzes the dehydration of 1,2-propanediol (1,2-PD) to propionaldehyde (Probable). This subunit is directly targeted to the bacterial microcompartment (BMC) (PubMed:20417607, PubMed:24933391).</text>
</comment>
<comment type="function">
    <text evidence="2">Expression of a cosmid containing the full 21-gene pdu operon in E.coli allows E.coli to grow on 1,2-propanediol (1,2-PD) with the appearance of BMCs in its cytoplasm.</text>
</comment>
<comment type="function">
    <text evidence="8">The 1,2-PD-specific bacterial microcompartment (BMC) concentrates low levels of 1,2-PD catabolic enzymes, concentrates volatile reaction intermediates thus enhancing pathway flux and keeps the level of toxic, mutagenic propionaldehyde low.</text>
</comment>
<comment type="catalytic activity">
    <reaction evidence="7">
        <text>propane-1,2-diol = propanal + H2O</text>
        <dbReference type="Rhea" id="RHEA:14569"/>
        <dbReference type="ChEBI" id="CHEBI:15377"/>
        <dbReference type="ChEBI" id="CHEBI:16997"/>
        <dbReference type="ChEBI" id="CHEBI:17153"/>
        <dbReference type="EC" id="4.2.1.28"/>
    </reaction>
</comment>
<comment type="cofactor">
    <cofactor evidence="1">
        <name>adenosylcob(III)alamin</name>
        <dbReference type="ChEBI" id="CHEBI:18408"/>
    </cofactor>
</comment>
<comment type="pathway">
    <text evidence="2">Polyol metabolism; 1,2-propanediol degradation.</text>
</comment>
<comment type="subunit">
    <text evidence="1">The propanediol dehydratase enzyme is a heterotrimeric complex composed of a large (PduC), a medium (PduD) and a small (PduE) subunit.</text>
</comment>
<comment type="subcellular location">
    <subcellularLocation>
        <location evidence="2 3 9">Bacterial microcompartment</location>
    </subcellularLocation>
    <text evidence="8">Probably in the interior of the BMC.</text>
</comment>
<comment type="domain">
    <text evidence="4">The N-terminal 18 residues form an alpha-helix which targets this enzyme and foreign proteins (tested with alcohol dehydrogenase) to the BMC.</text>
</comment>
<comment type="biotechnology">
    <text evidence="4">Ethanogenic BMCs can be made in E.coli by targeting pyruvate decarboxylase (pdc) and alcohol dehydrogenase (adh) to them. PduP(1-18)-Pdc and PduD(1-18)-Adh strains targeted to the BMC (PduA, PduB, PduJ, PduK, PduN, PduU) make significantly more ethanol than strains where Pdc and Adh are not targeted to the BMC.</text>
</comment>
<comment type="similarity">
    <text evidence="6">Belongs to the diol/glycerol dehydratase medium subunit family.</text>
</comment>
<reference key="1">
    <citation type="journal article" date="2008" name="J. Biol. Chem.">
        <title>Biochemical and Structural Insights into Bacterial Organelle Form and Biogenesis.</title>
        <authorList>
            <person name="Parsons J.B."/>
            <person name="Dinesh S.D."/>
            <person name="Deery E."/>
            <person name="Leech H.K."/>
            <person name="Brindley A.A."/>
            <person name="Heldt D."/>
            <person name="Frank S."/>
            <person name="Smales C.M."/>
            <person name="Lunsdorf H."/>
            <person name="Rambach A."/>
            <person name="Gass M.H."/>
            <person name="Bleloch A."/>
            <person name="McClean K.J."/>
            <person name="Munro A.W."/>
            <person name="Rigby S.E.J."/>
            <person name="Warren M.J."/>
            <person name="Prentice M.B."/>
        </authorList>
    </citation>
    <scope>NUCLEOTIDE SEQUENCE [GENOMIC DNA]</scope>
    <scope>FUNCTION</scope>
    <scope>IDENTIFICATION BY MASS SPECTROMETRY</scope>
    <scope>CATALYTIC ACTIVITY</scope>
    <scope>PATHWAY</scope>
    <scope>SUBCELLULAR LOCATION</scope>
</reference>
<reference key="2">
    <citation type="journal article" date="2010" name="Mol. Cell">
        <title>Synthesis of empty bacterial microcompartments, directed organelle protein incorporation, and evidence of filament-associated organelle movement.</title>
        <authorList>
            <person name="Parsons J.B."/>
            <person name="Frank S."/>
            <person name="Bhella D."/>
            <person name="Liang M."/>
            <person name="Prentice M.B."/>
            <person name="Mulvihill D.P."/>
            <person name="Warren M.J."/>
        </authorList>
    </citation>
    <scope>FUNCTION</scope>
    <scope>SUBCELLULAR LOCATION</scope>
</reference>
<reference key="3">
    <citation type="journal article" date="2014" name="ACS Synth. Biol.">
        <title>Solution structure of a bacterial microcompartment targeting peptide and its application in the construction of an ethanol bioreactor.</title>
        <authorList>
            <person name="Lawrence A.D."/>
            <person name="Frank S."/>
            <person name="Newnham S."/>
            <person name="Lee M.J."/>
            <person name="Brown I.R."/>
            <person name="Xue W.F."/>
            <person name="Rowe M.L."/>
            <person name="Mulvihill D.P."/>
            <person name="Prentice M.B."/>
            <person name="Howard M.J."/>
            <person name="Warren M.J."/>
        </authorList>
    </citation>
    <scope>FUNCTION</scope>
    <scope>SUBCELLULAR LOCATION</scope>
    <scope>DOMAIN</scope>
    <scope>BIOTECHNOLOGY</scope>
</reference>
<gene>
    <name evidence="5" type="primary">pduD</name>
</gene>
<name>PDUD_CITFR</name>
<protein>
    <recommendedName>
        <fullName>Propanediol dehydratase medium subunit</fullName>
        <ecNumber evidence="7">4.2.1.28</ecNumber>
    </recommendedName>
    <alternativeName>
        <fullName evidence="5">Diol dehydratase medium subunit</fullName>
        <shortName>DDH medium subunit</shortName>
    </alternativeName>
    <alternativeName>
        <fullName>Propanediol utilization protein PduD</fullName>
    </alternativeName>
</protein>
<organism>
    <name type="scientific">Citrobacter freundii</name>
    <dbReference type="NCBI Taxonomy" id="546"/>
    <lineage>
        <taxon>Bacteria</taxon>
        <taxon>Pseudomonadati</taxon>
        <taxon>Pseudomonadota</taxon>
        <taxon>Gammaproteobacteria</taxon>
        <taxon>Enterobacterales</taxon>
        <taxon>Enterobacteriaceae</taxon>
        <taxon>Citrobacter</taxon>
        <taxon>Citrobacter freundii complex</taxon>
    </lineage>
</organism>